<organism>
    <name type="scientific">Oryza sativa subsp. indica</name>
    <name type="common">Rice</name>
    <dbReference type="NCBI Taxonomy" id="39946"/>
    <lineage>
        <taxon>Eukaryota</taxon>
        <taxon>Viridiplantae</taxon>
        <taxon>Streptophyta</taxon>
        <taxon>Embryophyta</taxon>
        <taxon>Tracheophyta</taxon>
        <taxon>Spermatophyta</taxon>
        <taxon>Magnoliopsida</taxon>
        <taxon>Liliopsida</taxon>
        <taxon>Poales</taxon>
        <taxon>Poaceae</taxon>
        <taxon>BOP clade</taxon>
        <taxon>Oryzoideae</taxon>
        <taxon>Oryzeae</taxon>
        <taxon>Oryzinae</taxon>
        <taxon>Oryza</taxon>
        <taxon>Oryza sativa</taxon>
    </lineage>
</organism>
<keyword id="KW-0932">Cytokinin signaling pathway</keyword>
<keyword id="KW-0597">Phosphoprotein</keyword>
<keyword id="KW-1185">Reference proteome</keyword>
<keyword id="KW-0804">Transcription</keyword>
<keyword id="KW-0805">Transcription regulation</keyword>
<keyword id="KW-0902">Two-component regulatory system</keyword>
<evidence type="ECO:0000250" key="1">
    <source>
        <dbReference type="UniProtKB" id="Q9ZWS9"/>
    </source>
</evidence>
<evidence type="ECO:0000255" key="2">
    <source>
        <dbReference type="PROSITE-ProRule" id="PRU00169"/>
    </source>
</evidence>
<evidence type="ECO:0000305" key="3"/>
<evidence type="ECO:0000312" key="4">
    <source>
        <dbReference type="EMBL" id="EEC73647.1"/>
    </source>
</evidence>
<proteinExistence type="inferred from homology"/>
<comment type="function">
    <text evidence="1">Functions as a response regulator involved in His-to-Asp phosphorelay signal transduction system. Phosphorylation of the Asp residue in the receiver domain activates the ability of the protein to promote the transcription of target genes. Type-A response regulators seem to act as negative regulators of the cytokinin signaling.</text>
</comment>
<comment type="PTM">
    <text evidence="3">Two-component system major event consists of a His-to-Asp phosphorelay between a sensor histidine kinase (HK) and a response regulator (RR). In plants, the His-to-Asp phosphorelay involves an additional intermediate named Histidine-containing phosphotransfer protein (HPt). This multistep phosphorelay consists of a His-Asp-His-Asp sequential transfer of a phosphate group between first a His and an Asp of the HK protein, followed by the transfer to a conserved His of the HPt protein and finally the transfer to an Asp in the receiver domain of the RR protein.</text>
</comment>
<comment type="similarity">
    <text evidence="3">Belongs to the ARR family. Type-A subfamily.</text>
</comment>
<feature type="chain" id="PRO_0000433837" description="Two-component response regulator ORR11">
    <location>
        <begin position="1"/>
        <end position="147"/>
    </location>
</feature>
<feature type="domain" description="Response regulatory" evidence="2">
    <location>
        <begin position="29"/>
        <end position="146"/>
    </location>
</feature>
<feature type="modified residue" description="4-aspartylphosphate" evidence="2">
    <location>
        <position position="79"/>
    </location>
</feature>
<accession>B8AFR8</accession>
<protein>
    <recommendedName>
        <fullName evidence="3">Two-component response regulator ORR11</fullName>
    </recommendedName>
    <alternativeName>
        <fullName evidence="3">OsRR11</fullName>
    </alternativeName>
</protein>
<reference key="1">
    <citation type="journal article" date="2005" name="PLoS Biol.">
        <title>The genomes of Oryza sativa: a history of duplications.</title>
        <authorList>
            <person name="Yu J."/>
            <person name="Wang J."/>
            <person name="Lin W."/>
            <person name="Li S."/>
            <person name="Li H."/>
            <person name="Zhou J."/>
            <person name="Ni P."/>
            <person name="Dong W."/>
            <person name="Hu S."/>
            <person name="Zeng C."/>
            <person name="Zhang J."/>
            <person name="Zhang Y."/>
            <person name="Li R."/>
            <person name="Xu Z."/>
            <person name="Li S."/>
            <person name="Li X."/>
            <person name="Zheng H."/>
            <person name="Cong L."/>
            <person name="Lin L."/>
            <person name="Yin J."/>
            <person name="Geng J."/>
            <person name="Li G."/>
            <person name="Shi J."/>
            <person name="Liu J."/>
            <person name="Lv H."/>
            <person name="Li J."/>
            <person name="Wang J."/>
            <person name="Deng Y."/>
            <person name="Ran L."/>
            <person name="Shi X."/>
            <person name="Wang X."/>
            <person name="Wu Q."/>
            <person name="Li C."/>
            <person name="Ren X."/>
            <person name="Wang J."/>
            <person name="Wang X."/>
            <person name="Li D."/>
            <person name="Liu D."/>
            <person name="Zhang X."/>
            <person name="Ji Z."/>
            <person name="Zhao W."/>
            <person name="Sun Y."/>
            <person name="Zhang Z."/>
            <person name="Bao J."/>
            <person name="Han Y."/>
            <person name="Dong L."/>
            <person name="Ji J."/>
            <person name="Chen P."/>
            <person name="Wu S."/>
            <person name="Liu J."/>
            <person name="Xiao Y."/>
            <person name="Bu D."/>
            <person name="Tan J."/>
            <person name="Yang L."/>
            <person name="Ye C."/>
            <person name="Zhang J."/>
            <person name="Xu J."/>
            <person name="Zhou Y."/>
            <person name="Yu Y."/>
            <person name="Zhang B."/>
            <person name="Zhuang S."/>
            <person name="Wei H."/>
            <person name="Liu B."/>
            <person name="Lei M."/>
            <person name="Yu H."/>
            <person name="Li Y."/>
            <person name="Xu H."/>
            <person name="Wei S."/>
            <person name="He X."/>
            <person name="Fang L."/>
            <person name="Zhang Z."/>
            <person name="Zhang Y."/>
            <person name="Huang X."/>
            <person name="Su Z."/>
            <person name="Tong W."/>
            <person name="Li J."/>
            <person name="Tong Z."/>
            <person name="Li S."/>
            <person name="Ye J."/>
            <person name="Wang L."/>
            <person name="Fang L."/>
            <person name="Lei T."/>
            <person name="Chen C.-S."/>
            <person name="Chen H.-C."/>
            <person name="Xu Z."/>
            <person name="Li H."/>
            <person name="Huang H."/>
            <person name="Zhang F."/>
            <person name="Xu H."/>
            <person name="Li N."/>
            <person name="Zhao C."/>
            <person name="Li S."/>
            <person name="Dong L."/>
            <person name="Huang Y."/>
            <person name="Li L."/>
            <person name="Xi Y."/>
            <person name="Qi Q."/>
            <person name="Li W."/>
            <person name="Zhang B."/>
            <person name="Hu W."/>
            <person name="Zhang Y."/>
            <person name="Tian X."/>
            <person name="Jiao Y."/>
            <person name="Liang X."/>
            <person name="Jin J."/>
            <person name="Gao L."/>
            <person name="Zheng W."/>
            <person name="Hao B."/>
            <person name="Liu S.-M."/>
            <person name="Wang W."/>
            <person name="Yuan L."/>
            <person name="Cao M."/>
            <person name="McDermott J."/>
            <person name="Samudrala R."/>
            <person name="Wang J."/>
            <person name="Wong G.K.-S."/>
            <person name="Yang H."/>
        </authorList>
    </citation>
    <scope>NUCLEOTIDE SEQUENCE [LARGE SCALE GENOMIC DNA]</scope>
    <source>
        <strain>cv. 93-11</strain>
    </source>
</reference>
<gene>
    <name evidence="3" type="primary">RR11</name>
    <name evidence="4" type="ORF">OsI_08171</name>
</gene>
<sequence length="147" mass="15464">MSSIGAGAGGAVVGAAVAAVAVGGGAPPHVLAVDDSSVDRAVIAGILRSSRFRVTAVDSGKRALELLGSEPNVSMIITDYWMPEMTGYELLKKVKESSKLKKIPVVIMSSENVPTRISRCLEEGAEDFLVKPVRPSDVSRLFSRVLP</sequence>
<dbReference type="EMBL" id="CM000127">
    <property type="protein sequence ID" value="EEC73647.1"/>
    <property type="molecule type" value="Genomic_DNA"/>
</dbReference>
<dbReference type="SMR" id="B8AFR8"/>
<dbReference type="STRING" id="39946.B8AFR8"/>
<dbReference type="EnsemblPlants" id="BGIOSGA005988-TA">
    <property type="protein sequence ID" value="BGIOSGA005988-PA"/>
    <property type="gene ID" value="BGIOSGA005988"/>
</dbReference>
<dbReference type="Gramene" id="BGIOSGA005988-TA">
    <property type="protein sequence ID" value="BGIOSGA005988-PA"/>
    <property type="gene ID" value="BGIOSGA005988"/>
</dbReference>
<dbReference type="HOGENOM" id="CLU_000445_69_5_1"/>
<dbReference type="OMA" id="YIAAMVE"/>
<dbReference type="Proteomes" id="UP000007015">
    <property type="component" value="Chromosome 2"/>
</dbReference>
<dbReference type="GO" id="GO:0009736">
    <property type="term" value="P:cytokinin-activated signaling pathway"/>
    <property type="evidence" value="ECO:0007669"/>
    <property type="project" value="UniProtKB-KW"/>
</dbReference>
<dbReference type="GO" id="GO:0000160">
    <property type="term" value="P:phosphorelay signal transduction system"/>
    <property type="evidence" value="ECO:0007669"/>
    <property type="project" value="UniProtKB-KW"/>
</dbReference>
<dbReference type="CDD" id="cd17581">
    <property type="entry name" value="REC_typeA_ARR"/>
    <property type="match status" value="1"/>
</dbReference>
<dbReference type="FunFam" id="3.40.50.2300:FF:000159">
    <property type="entry name" value="Two-component response regulator ORR5"/>
    <property type="match status" value="1"/>
</dbReference>
<dbReference type="Gene3D" id="3.40.50.2300">
    <property type="match status" value="1"/>
</dbReference>
<dbReference type="InterPro" id="IPR045279">
    <property type="entry name" value="ARR-like"/>
</dbReference>
<dbReference type="InterPro" id="IPR011006">
    <property type="entry name" value="CheY-like_superfamily"/>
</dbReference>
<dbReference type="InterPro" id="IPR001789">
    <property type="entry name" value="Sig_transdc_resp-reg_receiver"/>
</dbReference>
<dbReference type="PANTHER" id="PTHR43874">
    <property type="entry name" value="TWO-COMPONENT RESPONSE REGULATOR"/>
    <property type="match status" value="1"/>
</dbReference>
<dbReference type="PANTHER" id="PTHR43874:SF74">
    <property type="entry name" value="TWO-COMPONENT RESPONSE REGULATOR ORR11"/>
    <property type="match status" value="1"/>
</dbReference>
<dbReference type="Pfam" id="PF00072">
    <property type="entry name" value="Response_reg"/>
    <property type="match status" value="1"/>
</dbReference>
<dbReference type="SMART" id="SM00448">
    <property type="entry name" value="REC"/>
    <property type="match status" value="1"/>
</dbReference>
<dbReference type="SUPFAM" id="SSF52172">
    <property type="entry name" value="CheY-like"/>
    <property type="match status" value="1"/>
</dbReference>
<dbReference type="PROSITE" id="PS50110">
    <property type="entry name" value="RESPONSE_REGULATORY"/>
    <property type="match status" value="1"/>
</dbReference>
<name>ORR11_ORYSI</name>